<protein>
    <recommendedName>
        <fullName>DNA endonuclease SAE2</fullName>
        <ecNumber>3.1.-.-</ecNumber>
    </recommendedName>
    <alternativeName>
        <fullName>Completion of meiotic recombination protein 1</fullName>
    </alternativeName>
    <alternativeName>
        <fullName>Sporulation in the absence of SPO11 protein 2</fullName>
    </alternativeName>
</protein>
<proteinExistence type="evidence at protein level"/>
<gene>
    <name type="primary">SAE2</name>
    <name type="synonym">COM1</name>
    <name type="ordered locus">YGL175C</name>
    <name type="ORF">G1639</name>
</gene>
<dbReference type="EC" id="3.1.-.-"/>
<dbReference type="EMBL" id="U49447">
    <property type="protein sequence ID" value="AAB96338.1"/>
    <property type="molecule type" value="Genomic_DNA"/>
</dbReference>
<dbReference type="EMBL" id="X84705">
    <property type="protein sequence ID" value="CAA59178.1"/>
    <property type="molecule type" value="Genomic_DNA"/>
</dbReference>
<dbReference type="EMBL" id="Z72697">
    <property type="protein sequence ID" value="CAA96887.1"/>
    <property type="molecule type" value="Genomic_DNA"/>
</dbReference>
<dbReference type="EMBL" id="BK006941">
    <property type="protein sequence ID" value="DAA07938.1"/>
    <property type="molecule type" value="Genomic_DNA"/>
</dbReference>
<dbReference type="PIR" id="S59236">
    <property type="entry name" value="S59236"/>
</dbReference>
<dbReference type="RefSeq" id="NP_011340.1">
    <property type="nucleotide sequence ID" value="NM_001181040.1"/>
</dbReference>
<dbReference type="SMR" id="P46946"/>
<dbReference type="BioGRID" id="33078">
    <property type="interactions" value="198"/>
</dbReference>
<dbReference type="DIP" id="DIP-1603N"/>
<dbReference type="FunCoup" id="P46946">
    <property type="interactions" value="69"/>
</dbReference>
<dbReference type="IntAct" id="P46946">
    <property type="interactions" value="9"/>
</dbReference>
<dbReference type="MINT" id="P46946"/>
<dbReference type="STRING" id="4932.YGL175C"/>
<dbReference type="iPTMnet" id="P46946"/>
<dbReference type="PaxDb" id="4932-YGL175C"/>
<dbReference type="PeptideAtlas" id="P46946"/>
<dbReference type="EnsemblFungi" id="YGL175C_mRNA">
    <property type="protein sequence ID" value="YGL175C"/>
    <property type="gene ID" value="YGL175C"/>
</dbReference>
<dbReference type="GeneID" id="852700"/>
<dbReference type="KEGG" id="sce:YGL175C"/>
<dbReference type="AGR" id="SGD:S000003143"/>
<dbReference type="SGD" id="S000003143">
    <property type="gene designation" value="SAE2"/>
</dbReference>
<dbReference type="VEuPathDB" id="FungiDB:YGL175C"/>
<dbReference type="eggNOG" id="ENOG502S084">
    <property type="taxonomic scope" value="Eukaryota"/>
</dbReference>
<dbReference type="HOGENOM" id="CLU_064983_0_0_1"/>
<dbReference type="InParanoid" id="P46946"/>
<dbReference type="OMA" id="PPYEREY"/>
<dbReference type="OrthoDB" id="5801062at2759"/>
<dbReference type="BioCyc" id="YEAST:G3O-30663-MONOMER"/>
<dbReference type="BioGRID-ORCS" id="852700">
    <property type="hits" value="0 hits in 10 CRISPR screens"/>
</dbReference>
<dbReference type="PRO" id="PR:P46946"/>
<dbReference type="Proteomes" id="UP000002311">
    <property type="component" value="Chromosome VII"/>
</dbReference>
<dbReference type="RNAct" id="P46946">
    <property type="molecule type" value="protein"/>
</dbReference>
<dbReference type="GO" id="GO:0005737">
    <property type="term" value="C:cytoplasm"/>
    <property type="evidence" value="ECO:0007005"/>
    <property type="project" value="SGD"/>
</dbReference>
<dbReference type="GO" id="GO:0030870">
    <property type="term" value="C:Mre11 complex"/>
    <property type="evidence" value="ECO:0000314"/>
    <property type="project" value="SGD"/>
</dbReference>
<dbReference type="GO" id="GO:0005654">
    <property type="term" value="C:nucleoplasm"/>
    <property type="evidence" value="ECO:0000304"/>
    <property type="project" value="Reactome"/>
</dbReference>
<dbReference type="GO" id="GO:0005634">
    <property type="term" value="C:nucleus"/>
    <property type="evidence" value="ECO:0007005"/>
    <property type="project" value="SGD"/>
</dbReference>
<dbReference type="GO" id="GO:0004520">
    <property type="term" value="F:DNA endonuclease activity"/>
    <property type="evidence" value="ECO:0000269"/>
    <property type="project" value="Reactome"/>
</dbReference>
<dbReference type="GO" id="GO:0003690">
    <property type="term" value="F:double-stranded DNA binding"/>
    <property type="evidence" value="ECO:0000314"/>
    <property type="project" value="SGD"/>
</dbReference>
<dbReference type="GO" id="GO:0042802">
    <property type="term" value="F:identical protein binding"/>
    <property type="evidence" value="ECO:0000353"/>
    <property type="project" value="IntAct"/>
</dbReference>
<dbReference type="GO" id="GO:0000014">
    <property type="term" value="F:single-stranded DNA endodeoxyribonuclease activity"/>
    <property type="evidence" value="ECO:0000314"/>
    <property type="project" value="SGD"/>
</dbReference>
<dbReference type="GO" id="GO:0006308">
    <property type="term" value="P:DNA catabolic process"/>
    <property type="evidence" value="ECO:0000314"/>
    <property type="project" value="SGD"/>
</dbReference>
<dbReference type="GO" id="GO:0000729">
    <property type="term" value="P:DNA double-strand break processing"/>
    <property type="evidence" value="ECO:0000315"/>
    <property type="project" value="SGD"/>
</dbReference>
<dbReference type="GO" id="GO:0010791">
    <property type="term" value="P:DNA double-strand break processing involved in repair via synthesis-dependent strand annealing"/>
    <property type="evidence" value="ECO:0000315"/>
    <property type="project" value="SGD"/>
</dbReference>
<dbReference type="GO" id="GO:0007534">
    <property type="term" value="P:gene conversion at mating-type locus"/>
    <property type="evidence" value="ECO:0000315"/>
    <property type="project" value="SGD"/>
</dbReference>
<dbReference type="GO" id="GO:0042138">
    <property type="term" value="P:meiotic DNA double-strand break formation"/>
    <property type="evidence" value="ECO:0000316"/>
    <property type="project" value="SGD"/>
</dbReference>
<dbReference type="GO" id="GO:0000706">
    <property type="term" value="P:meiotic DNA double-strand break processing"/>
    <property type="evidence" value="ECO:0000315"/>
    <property type="project" value="SGD"/>
</dbReference>
<dbReference type="GO" id="GO:0000723">
    <property type="term" value="P:telomere maintenance"/>
    <property type="evidence" value="ECO:0000315"/>
    <property type="project" value="SGD"/>
</dbReference>
<dbReference type="GO" id="GO:0031860">
    <property type="term" value="P:telomeric 3' overhang formation"/>
    <property type="evidence" value="ECO:0000315"/>
    <property type="project" value="SGD"/>
</dbReference>
<dbReference type="InterPro" id="IPR013882">
    <property type="entry name" value="Ctp1_C"/>
</dbReference>
<dbReference type="Pfam" id="PF08573">
    <property type="entry name" value="SAE2"/>
    <property type="match status" value="1"/>
</dbReference>
<organism>
    <name type="scientific">Saccharomyces cerevisiae (strain ATCC 204508 / S288c)</name>
    <name type="common">Baker's yeast</name>
    <dbReference type="NCBI Taxonomy" id="559292"/>
    <lineage>
        <taxon>Eukaryota</taxon>
        <taxon>Fungi</taxon>
        <taxon>Dikarya</taxon>
        <taxon>Ascomycota</taxon>
        <taxon>Saccharomycotina</taxon>
        <taxon>Saccharomycetes</taxon>
        <taxon>Saccharomycetales</taxon>
        <taxon>Saccharomycetaceae</taxon>
        <taxon>Saccharomyces</taxon>
    </lineage>
</organism>
<reference key="1">
    <citation type="journal article" date="1997" name="Genetics">
        <title>A general method for identifying recessive diploid-specific mutations in Saccharomyces cerevisiae, its application to the isolation of mutants blocked at intermediate stages of meiotic prophase and characterization of a new gene SAE2.</title>
        <authorList>
            <person name="McKee A.H.Z."/>
            <person name="Kleckner N."/>
        </authorList>
    </citation>
    <scope>NUCLEOTIDE SEQUENCE [GENOMIC DNA]</scope>
    <source>
        <strain>ATCC 204508 / S288c</strain>
    </source>
</reference>
<reference key="2">
    <citation type="journal article" date="1995" name="Yeast">
        <title>The sequence of an 11.1 kb fragment on the left arm of Saccharomyces cerevisiae chromosome VII reveals six open reading frames including NSP49, KEM1 and four putative new genes.</title>
        <authorList>
            <person name="Bertani I."/>
            <person name="Coglievina M."/>
            <person name="Zaccaria P."/>
            <person name="Klima R."/>
            <person name="Bruschi C.V."/>
        </authorList>
    </citation>
    <scope>NUCLEOTIDE SEQUENCE [GENOMIC DNA]</scope>
    <source>
        <strain>ATCC 96604 / S288c / FY1679</strain>
    </source>
</reference>
<reference key="3">
    <citation type="journal article" date="1997" name="Nature">
        <title>The nucleotide sequence of Saccharomyces cerevisiae chromosome VII.</title>
        <authorList>
            <person name="Tettelin H."/>
            <person name="Agostoni-Carbone M.L."/>
            <person name="Albermann K."/>
            <person name="Albers M."/>
            <person name="Arroyo J."/>
            <person name="Backes U."/>
            <person name="Barreiros T."/>
            <person name="Bertani I."/>
            <person name="Bjourson A.J."/>
            <person name="Brueckner M."/>
            <person name="Bruschi C.V."/>
            <person name="Carignani G."/>
            <person name="Castagnoli L."/>
            <person name="Cerdan E."/>
            <person name="Clemente M.L."/>
            <person name="Coblenz A."/>
            <person name="Coglievina M."/>
            <person name="Coissac E."/>
            <person name="Defoor E."/>
            <person name="Del Bino S."/>
            <person name="Delius H."/>
            <person name="Delneri D."/>
            <person name="de Wergifosse P."/>
            <person name="Dujon B."/>
            <person name="Durand P."/>
            <person name="Entian K.-D."/>
            <person name="Eraso P."/>
            <person name="Escribano V."/>
            <person name="Fabiani L."/>
            <person name="Fartmann B."/>
            <person name="Feroli F."/>
            <person name="Feuermann M."/>
            <person name="Frontali L."/>
            <person name="Garcia-Gonzalez M."/>
            <person name="Garcia-Saez M.I."/>
            <person name="Goffeau A."/>
            <person name="Guerreiro P."/>
            <person name="Hani J."/>
            <person name="Hansen M."/>
            <person name="Hebling U."/>
            <person name="Hernandez K."/>
            <person name="Heumann K."/>
            <person name="Hilger F."/>
            <person name="Hofmann B."/>
            <person name="Indge K.J."/>
            <person name="James C.M."/>
            <person name="Klima R."/>
            <person name="Koetter P."/>
            <person name="Kramer B."/>
            <person name="Kramer W."/>
            <person name="Lauquin G."/>
            <person name="Leuther H."/>
            <person name="Louis E.J."/>
            <person name="Maillier E."/>
            <person name="Marconi A."/>
            <person name="Martegani E."/>
            <person name="Mazon M.J."/>
            <person name="Mazzoni C."/>
            <person name="McReynolds A.D.K."/>
            <person name="Melchioretto P."/>
            <person name="Mewes H.-W."/>
            <person name="Minenkova O."/>
            <person name="Mueller-Auer S."/>
            <person name="Nawrocki A."/>
            <person name="Netter P."/>
            <person name="Neu R."/>
            <person name="Nombela C."/>
            <person name="Oliver S.G."/>
            <person name="Panzeri L."/>
            <person name="Paoluzi S."/>
            <person name="Plevani P."/>
            <person name="Portetelle D."/>
            <person name="Portillo F."/>
            <person name="Potier S."/>
            <person name="Purnelle B."/>
            <person name="Rieger M."/>
            <person name="Riles L."/>
            <person name="Rinaldi T."/>
            <person name="Robben J."/>
            <person name="Rodrigues-Pousada C."/>
            <person name="Rodriguez-Belmonte E."/>
            <person name="Rodriguez-Torres A.M."/>
            <person name="Rose M."/>
            <person name="Ruzzi M."/>
            <person name="Saliola M."/>
            <person name="Sanchez-Perez M."/>
            <person name="Schaefer B."/>
            <person name="Schaefer M."/>
            <person name="Scharfe M."/>
            <person name="Schmidheini T."/>
            <person name="Schreer A."/>
            <person name="Skala J."/>
            <person name="Souciet J.-L."/>
            <person name="Steensma H.Y."/>
            <person name="Talla E."/>
            <person name="Thierry A."/>
            <person name="Vandenbol M."/>
            <person name="van der Aart Q.J.M."/>
            <person name="Van Dyck L."/>
            <person name="Vanoni M."/>
            <person name="Verhasselt P."/>
            <person name="Voet M."/>
            <person name="Volckaert G."/>
            <person name="Wambutt R."/>
            <person name="Watson M.D."/>
            <person name="Weber N."/>
            <person name="Wedler E."/>
            <person name="Wedler H."/>
            <person name="Wipfli P."/>
            <person name="Wolf K."/>
            <person name="Wright L.F."/>
            <person name="Zaccaria P."/>
            <person name="Zimmermann M."/>
            <person name="Zollner A."/>
            <person name="Kleine K."/>
        </authorList>
    </citation>
    <scope>NUCLEOTIDE SEQUENCE [LARGE SCALE GENOMIC DNA]</scope>
    <source>
        <strain>ATCC 204508 / S288c</strain>
    </source>
</reference>
<reference key="4">
    <citation type="journal article" date="2014" name="G3 (Bethesda)">
        <title>The reference genome sequence of Saccharomyces cerevisiae: Then and now.</title>
        <authorList>
            <person name="Engel S.R."/>
            <person name="Dietrich F.S."/>
            <person name="Fisk D.G."/>
            <person name="Binkley G."/>
            <person name="Balakrishnan R."/>
            <person name="Costanzo M.C."/>
            <person name="Dwight S.S."/>
            <person name="Hitz B.C."/>
            <person name="Karra K."/>
            <person name="Nash R.S."/>
            <person name="Weng S."/>
            <person name="Wong E.D."/>
            <person name="Lloyd P."/>
            <person name="Skrzypek M.S."/>
            <person name="Miyasato S.R."/>
            <person name="Simison M."/>
            <person name="Cherry J.M."/>
        </authorList>
    </citation>
    <scope>GENOME REANNOTATION</scope>
    <source>
        <strain>ATCC 204508 / S288c</strain>
    </source>
</reference>
<reference key="5">
    <citation type="journal article" date="1997" name="Genetics">
        <title>Isolation of COM1, a new gene required to complete meiotic double-strand break-induced recombination in Saccharomyces cerevisiae.</title>
        <authorList>
            <person name="Prinz S."/>
            <person name="Amon A."/>
            <person name="Klein F."/>
        </authorList>
    </citation>
    <scope>FUNCTION</scope>
</reference>
<reference key="6">
    <citation type="journal article" date="2000" name="Science">
        <title>Direct coupling between meiotic DNA replication and recombination initiation.</title>
        <authorList>
            <person name="Borde V."/>
            <person name="Goldman A.S."/>
            <person name="Lichten M."/>
        </authorList>
    </citation>
    <scope>FUNCTION</scope>
</reference>
<reference key="7">
    <citation type="journal article" date="2001" name="Genetics">
        <title>Fidelity of mitotic double-strand-break repair in Saccharomyces cerevisiae: a role for SAE2/COM1.</title>
        <authorList>
            <person name="Rattray A.J."/>
            <person name="McGill C.B."/>
            <person name="Shafer B.K."/>
            <person name="Strathern J.N."/>
        </authorList>
    </citation>
    <scope>FUNCTION</scope>
</reference>
<reference key="8">
    <citation type="journal article" date="2002" name="Mol. Cell">
        <title>Wild-type levels of Spo11-induced DSBs are required for normal single-strand resection during meiosis.</title>
        <authorList>
            <person name="Neale M.J."/>
            <person name="Ramachandran M."/>
            <person name="Trelles-Sticken E."/>
            <person name="Scherthan H."/>
            <person name="Goldman A.S."/>
        </authorList>
    </citation>
    <scope>FUNCTION</scope>
</reference>
<reference key="9">
    <citation type="journal article" date="2002" name="Cell">
        <title>The Mre11 complex is required for repair of hairpin-capped double-strand breaks and prevention of chromosome rearrangements.</title>
        <authorList>
            <person name="Lobachev K.S."/>
            <person name="Gordenin D.A."/>
            <person name="Resnick M.A."/>
        </authorList>
    </citation>
    <scope>FUNCTION</scope>
</reference>
<reference key="10">
    <citation type="journal article" date="2003" name="Genes Cells">
        <title>VDE-initiated intein homing in Saccharomyces cerevisiae proceeds in a meiotic recombination-like manner.</title>
        <authorList>
            <person name="Fukuda T."/>
            <person name="Nogami S."/>
            <person name="Ohya Y."/>
        </authorList>
    </citation>
    <scope>FUNCTION</scope>
</reference>
<reference key="11">
    <citation type="journal article" date="2003" name="Mol. Biol. Cell">
        <title>Sudden telomere lengthening triggers a Rad53-dependent checkpoint in Saccharomyces cerevisiae.</title>
        <authorList>
            <person name="Viscardi V."/>
            <person name="Baroni E."/>
            <person name="Romano M."/>
            <person name="Lucchini G."/>
            <person name="Longhese M.P."/>
        </authorList>
    </citation>
    <scope>FUNCTION</scope>
</reference>
<reference key="12">
    <citation type="journal article" date="2003" name="Nature">
        <title>Global analysis of protein localization in budding yeast.</title>
        <authorList>
            <person name="Huh W.-K."/>
            <person name="Falvo J.V."/>
            <person name="Gerke L.C."/>
            <person name="Carroll A.S."/>
            <person name="Howson R.W."/>
            <person name="Weissman J.S."/>
            <person name="O'Shea E.K."/>
        </authorList>
    </citation>
    <scope>SUBCELLULAR LOCATION [LARGE SCALE ANALYSIS]</scope>
</reference>
<reference key="13">
    <citation type="journal article" date="2003" name="Nature">
        <title>Global analysis of protein expression in yeast.</title>
        <authorList>
            <person name="Ghaemmaghami S."/>
            <person name="Huh W.-K."/>
            <person name="Bower K."/>
            <person name="Howson R.W."/>
            <person name="Belle A."/>
            <person name="Dephoure N."/>
            <person name="O'Shea E.K."/>
            <person name="Weissman J.S."/>
        </authorList>
    </citation>
    <scope>LEVEL OF PROTEIN EXPRESSION [LARGE SCALE ANALYSIS]</scope>
</reference>
<reference key="14">
    <citation type="journal article" date="2004" name="Cell">
        <title>Choreography of the DNA damage response: spatiotemporal relationships among checkpoint and repair proteins.</title>
        <authorList>
            <person name="Lisby M."/>
            <person name="Barlow J.H."/>
            <person name="Burgess R.C."/>
            <person name="Rothstein R."/>
        </authorList>
    </citation>
    <scope>FUNCTION</scope>
    <scope>SUBCELLULAR LOCATION</scope>
</reference>
<reference key="15">
    <citation type="journal article" date="2004" name="Mol. Cell. Biol.">
        <title>Microhomology-dependent end joining and repair of transposon-induced DNA hairpins by host factors in Saccharomyces cerevisiae.</title>
        <authorList>
            <person name="Yu J."/>
            <person name="Marshall K."/>
            <person name="Yamaguchi M."/>
            <person name="Haber J.E."/>
            <person name="Weil C.F."/>
        </authorList>
    </citation>
    <scope>FUNCTION</scope>
</reference>
<reference key="16">
    <citation type="journal article" date="2004" name="Mol. Cell. Biol.">
        <title>The functions of budding yeast Sae2 in the DNA damage response require Mec1- and Tel1-dependent phosphorylation.</title>
        <authorList>
            <person name="Baroni E."/>
            <person name="Viscardi V."/>
            <person name="Cartagena-Lirola H."/>
            <person name="Lucchini G."/>
            <person name="Longhese M.P."/>
        </authorList>
    </citation>
    <scope>FUNCTION</scope>
    <scope>PHOSPHORYLATION</scope>
    <scope>MUTAGENESIS OF SER-72; SER-73; THR-75; SER-76; THR-90; SER-249; SER-278; THR-279 AND SER-289</scope>
</reference>
<reference key="17">
    <citation type="journal article" date="2005" name="Genes Dev.">
        <title>The control of Spo11's interaction with meiotic recombination hotspots.</title>
        <authorList>
            <person name="Prieler S."/>
            <person name="Penkner A."/>
            <person name="Borde V."/>
            <person name="Klein F."/>
        </authorList>
    </citation>
    <scope>FUNCTION</scope>
</reference>
<reference key="18">
    <citation type="journal article" date="2005" name="Genes Dev.">
        <title>A mechanism of palindromic gene amplification in Saccharomyces cerevisiae.</title>
        <authorList>
            <person name="Rattray A.J."/>
            <person name="Shafer B.K."/>
            <person name="Neelam B."/>
            <person name="Strathern J.N."/>
        </authorList>
    </citation>
    <scope>FUNCTION</scope>
</reference>
<reference key="19">
    <citation type="journal article" date="2005" name="Genetics">
        <title>Multiple endonucleases function to repair covalent topoisomerase I complexes in Saccharomyces cerevisiae.</title>
        <authorList>
            <person name="Deng C."/>
            <person name="Brown J.A."/>
            <person name="You D."/>
            <person name="Brown J.M."/>
        </authorList>
    </citation>
    <scope>FUNCTION</scope>
</reference>
<reference key="20">
    <citation type="journal article" date="2005" name="J. Biol. Chem.">
        <title>The Saccharomyces cerevisiae Sae2 protein promotes resection and bridging of double strand break ends.</title>
        <authorList>
            <person name="Clerici M."/>
            <person name="Mantiero D."/>
            <person name="Lucchini G."/>
            <person name="Longhese M.P."/>
        </authorList>
    </citation>
    <scope>FUNCTION</scope>
</reference>
<reference key="21">
    <citation type="journal article" date="2006" name="Cell Cycle">
        <title>Budding yeast Sae2 is an in vivo target of the Mec1 and Tel1 checkpoint kinases during meiosis.</title>
        <authorList>
            <person name="Cartagena-Lirola H."/>
            <person name="Guerini I."/>
            <person name="Viscardi V."/>
            <person name="Lucchini G."/>
            <person name="Longhese M.P."/>
        </authorList>
    </citation>
    <scope>FUNCTION</scope>
    <scope>PHOSPHORYLATION</scope>
    <scope>MUTAGENESIS OF SER-73; THR-90; SER-249; THR-279 AND SER-289</scope>
</reference>
<reference key="22">
    <citation type="journal article" date="2006" name="EMBO Rep.">
        <title>The Saccharomyces cerevisiae Sae2 protein negatively regulates DNA damage checkpoint signalling.</title>
        <authorList>
            <person name="Clerici M."/>
            <person name="Mantiero D."/>
            <person name="Lucchini G."/>
            <person name="Longhese M.P."/>
        </authorList>
    </citation>
    <scope>FUNCTION</scope>
</reference>
<reference key="23">
    <citation type="journal article" date="2007" name="Genetics">
        <title>Saccharomyces cerevisiae Sae2- and Tel1-dependent single-strand DNA formation at DNA break promotes microhomology-mediated end joining.</title>
        <authorList>
            <person name="Lee K."/>
            <person name="Lee S.E."/>
        </authorList>
    </citation>
    <scope>FUNCTION</scope>
</reference>
<reference key="24">
    <citation type="journal article" date="2007" name="Genome Res.">
        <title>Examining protein protein interactions using endogenously tagged yeast arrays: the cross-and-capture system.</title>
        <authorList>
            <person name="Suter B."/>
            <person name="Fetchko M.J."/>
            <person name="Imhof R."/>
            <person name="Graham C.I."/>
            <person name="Stoffel-Studer I."/>
            <person name="Zbinden C."/>
            <person name="Raghavan M."/>
            <person name="Lopez L."/>
            <person name="Beneti L."/>
            <person name="Hort J."/>
            <person name="Fillingham J."/>
            <person name="Greenblatt J.F."/>
            <person name="Giaever G."/>
            <person name="Nislow C."/>
            <person name="Stagljar I."/>
        </authorList>
    </citation>
    <scope>SUBUNIT</scope>
    <scope>INTERACTION WITH MRE11</scope>
</reference>
<reference key="25">
    <citation type="journal article" date="2007" name="Mol. Cell">
        <title>Sae2 is an endonuclease that processes hairpin DNA cooperatively with the Mre11/Rad50/Xrs2 complex.</title>
        <authorList>
            <person name="Lengsfeld B.M."/>
            <person name="Rattray A.J."/>
            <person name="Bhaskara V."/>
            <person name="Ghirlando R."/>
            <person name="Paull T.T."/>
        </authorList>
    </citation>
    <scope>FUNCTION</scope>
    <scope>DNA-BINDING</scope>
    <scope>DOMAIN</scope>
    <scope>MUTAGENESIS OF GLY-270</scope>
</reference>
<reference key="26">
    <citation type="journal article" date="2008" name="Genes Genet. Syst.">
        <title>Sae2p phosphorylation is crucial for cooperation with Mre11p for resection of DNA double-strand break ends during meiotic recombination in Saccharomyces cerevisiae.</title>
        <authorList>
            <person name="Terasawa M."/>
            <person name="Ogawa T."/>
            <person name="Tsukamoto Y."/>
            <person name="Ogawa H."/>
        </authorList>
    </citation>
    <scope>FUNCTION</scope>
    <scope>SUBCELLULAR LOCATION</scope>
    <scope>PHOSPHORYLATION</scope>
    <scope>MUTAGENESIS OF SER-73; THR-90; SER-249; THR-279 AND SER-289</scope>
</reference>
<reference key="27">
    <citation type="journal article" date="2008" name="Nature">
        <title>CDK targets Sae2 to control DNA-end resection and homologous recombination.</title>
        <authorList>
            <person name="Huertas P."/>
            <person name="Cortes-Ledesma F."/>
            <person name="Sartori A.A."/>
            <person name="Aguilera A."/>
            <person name="Jackson S.P."/>
        </authorList>
    </citation>
    <scope>FUNCTION</scope>
    <scope>MUTAGENESIS OF ARG-223; LEU-225 AND SER-267</scope>
    <scope>PHOSPHORYLATION AT SER-267</scope>
</reference>
<reference key="28">
    <citation type="journal article" date="2008" name="Nature">
        <title>Sae2, Exo1 and Sgs1 collaborate in DNA double-strand break processing.</title>
        <authorList>
            <person name="Mimitou E.P."/>
            <person name="Symington L.S."/>
        </authorList>
    </citation>
    <scope>FUNCTION</scope>
</reference>
<reference key="29">
    <citation type="journal article" date="2009" name="Cell">
        <title>Replicon dynamics, dormant origin firing, and terminal fork integrity after double-strand break formation.</title>
        <authorList>
            <person name="Doksani Y."/>
            <person name="Bermejo R."/>
            <person name="Fiorani S."/>
            <person name="Haber J.E."/>
            <person name="Foiani M."/>
        </authorList>
    </citation>
    <scope>FUNCTION</scope>
</reference>
<reference key="30">
    <citation type="journal article" date="2009" name="DNA Repair">
        <title>Size-dependent palindrome-induced intrachromosomal recombination in yeast.</title>
        <authorList>
            <person name="Lisnic B."/>
            <person name="Svetec I.K."/>
            <person name="Stafa A."/>
            <person name="Zgaga Z."/>
        </authorList>
    </citation>
    <scope>FUNCTION</scope>
</reference>
<reference key="31">
    <citation type="journal article" date="2009" name="Science">
        <title>Global analysis of Cdk1 substrate phosphorylation sites provides insights into evolution.</title>
        <authorList>
            <person name="Holt L.J."/>
            <person name="Tuch B.B."/>
            <person name="Villen J."/>
            <person name="Johnson A.D."/>
            <person name="Gygi S.P."/>
            <person name="Morgan D.O."/>
        </authorList>
    </citation>
    <scope>PHOSPHORYLATION [LARGE SCALE ANALYSIS] AT SER-143</scope>
    <scope>IDENTIFICATION BY MASS SPECTROMETRY [LARGE SCALE ANALYSIS]</scope>
</reference>
<reference key="32">
    <citation type="journal article" date="2010" name="J. Biol. Chem.">
        <title>Processing of meiotic DNA double strand breaks requires cyclin-dependent kinase and multiple nucleases.</title>
        <authorList>
            <person name="Manfrini N."/>
            <person name="Guerini I."/>
            <person name="Citterio A."/>
            <person name="Lucchini G."/>
            <person name="Longhese M.P."/>
        </authorList>
    </citation>
    <scope>FUNCTION</scope>
    <scope>MUTAGENESIS OF SER-267</scope>
    <scope>PHOSPHORYLATION AT SER-267</scope>
</reference>
<reference key="33">
    <citation type="journal article" date="2010" name="Nucleic Acids Res.">
        <title>A truncated DNA-damage-signaling response is activated after DSB formation in the G1 phase of Saccharomyces cerevisiae.</title>
        <authorList>
            <person name="Janke R."/>
            <person name="Herzberg K."/>
            <person name="Rolfsmeier M."/>
            <person name="Mar J."/>
            <person name="Bashkirov V.I."/>
            <person name="Haghnazari E."/>
            <person name="Cantin G."/>
            <person name="Yates J.R. III"/>
            <person name="Heyer W.D."/>
        </authorList>
    </citation>
    <scope>FUNCTION</scope>
    <scope>PHOSPHORYLATION</scope>
</reference>
<comment type="function">
    <text evidence="2 3 4 5 6 7 10 11 12 13 14 15 16 17 18 19 21 22 23 24 25 26 27 28 29">Endonuclease that cooperates with the MRX complex in processing meiotic and mitotic double-strand breaks by allowing the endonucleolytic removal of SPO11 from the break sites and ensuring both resection and intrachromosomal association of the broken ends. Required for proper recovery from checkpoint-mediated cell cycle arrest after DNA damage. MRX complex and SAE2 remove a small oligonucleotide(s) from the DNA ends to form an early intermediate which is rapidly processed by EXO1 and/or SGS1 to generate extensive tracts of single-stranded DNA that serve as substrate for RAD51. Plays a transitional role in the dissociation of MRE11 from, and the recruitment of RAD52 to, repair foci. Ensures that both ends of a DSB participate in a recombination event and impairs the formation of palindromic structures in the genome. With TEL1, promotes microhomology-mediated end joining (MMEJ) but inhibits non-homologous end joining (NHEJ), likely by regulating MRE11-dependent ssDNA accumulation at DNA break. SAE2 and MRX are particularly important for removal of hairpins, bulky adducts and other irregular end structures. Facilitates telomere length reequilibration and subsequent checkpoint switch off. Involved in homing efficiency of VMA1 intein VDE and in repair of transposon excision sites.</text>
</comment>
<comment type="subunit">
    <text evidence="20">Dimer or multimer. Interacts with MRE11.</text>
</comment>
<comment type="interaction">
    <interactant intactId="EBI-16440">
        <id>P46946</id>
    </interactant>
    <interactant intactId="EBI-11255">
        <id>P32829</id>
        <label>MRE11</label>
    </interactant>
    <organismsDiffer>false</organismsDiffer>
    <experiments>2</experiments>
</comment>
<comment type="interaction">
    <interactant intactId="EBI-16440">
        <id>P46946</id>
    </interactant>
    <interactant intactId="EBI-16440">
        <id>P46946</id>
        <label>SAE2</label>
    </interactant>
    <organismsDiffer>false</organismsDiffer>
    <experiments>3</experiments>
</comment>
<comment type="interaction">
    <interactant intactId="EBI-16440">
        <id>P46946</id>
    </interactant>
    <interactant intactId="EBI-20599">
        <id>P33301</id>
        <label>XRS2</label>
    </interactant>
    <organismsDiffer>false</organismsDiffer>
    <experiments>3</experiments>
</comment>
<comment type="subcellular location">
    <subcellularLocation>
        <location evidence="8">Cytoplasm</location>
    </subcellularLocation>
    <subcellularLocation>
        <location evidence="12 22">Nucleus</location>
    </subcellularLocation>
    <text>Accumulates in foci at the precise time when MRE11 foci disassemble and RAD52 foci assemble (PubMed:18670132). Remains associated with DSBs along with MRE11 in nuclease-deficient cells (PubMed:18670132).</text>
</comment>
<comment type="PTM">
    <text evidence="11 18 22 23 27 28">Phosphorylated forms accumulate periodically during the unperturbed cell cycle and in response to DNA damage in G2. Phosphorylated by MEC1 and TEL1. Mutagenesis experiments showed that several of the 5 residues located in canonical (S/T)Q motifs, which are favored for phosphorylation by ATM/ATR kinases (Ser-73, Thr-90, Ser-249, Thr-279 and Ser-289) may be phosphorylated. Phosphorylated at Ser-267 by CDC28 which is required to initiate meiotic DSB resection by allowing SPO11 removal from DSB ends.</text>
</comment>
<comment type="miscellaneous">
    <text evidence="9">Present with 1030 molecules/cell in log phase SD medium.</text>
</comment>
<comment type="similarity">
    <text evidence="30">Belongs to the COM1/SAE2/CtIP family.</text>
</comment>
<accession>P46946</accession>
<accession>D6VTX7</accession>
<feature type="chain" id="PRO_0000097565" description="DNA endonuclease SAE2">
    <location>
        <begin position="1"/>
        <end position="345"/>
    </location>
</feature>
<feature type="region of interest" description="DNA-binding">
    <location>
        <begin position="21"/>
        <end position="172"/>
    </location>
</feature>
<feature type="region of interest" description="Disordered" evidence="1">
    <location>
        <begin position="265"/>
        <end position="290"/>
    </location>
</feature>
<feature type="modified residue" description="Phosphoserine" evidence="31">
    <location>
        <position position="143"/>
    </location>
</feature>
<feature type="modified residue" description="Phosphoserine; by CDC28" evidence="23 28">
    <location>
        <position position="267"/>
    </location>
</feature>
<feature type="mutagenesis site" description="Reduces DNA damage-induced phosphorylation; when associated with A-73, A-75, A-76 and A-90." evidence="11">
    <original>S</original>
    <variation>A</variation>
    <location>
        <position position="72"/>
    </location>
</feature>
<feature type="mutagenesis site" description="Reduces DNA damage-induced phosphorylation; when associated with A-73, A-75, A-76 and A-90. Abolishes DNA damage-induced phosphorylation and function in DNA repair; when associated with A-90, A-249, A-279 and A-289." evidence="11 18 22">
    <original>S</original>
    <variation>A</variation>
    <location>
        <position position="73"/>
    </location>
</feature>
<feature type="mutagenesis site" description="Reduces DNA damage-induced phosphorylation; when associated with A-72, A-75, A-76 and A-90." evidence="11">
    <original>T</original>
    <variation>A</variation>
    <location>
        <position position="75"/>
    </location>
</feature>
<feature type="mutagenesis site" description="Reduces DNA damage-induced phosphorylation; when associated with A-72, A-73, A-75 and A-90." evidence="11">
    <original>S</original>
    <variation>A</variation>
    <location>
        <position position="76"/>
    </location>
</feature>
<feature type="mutagenesis site" description="Reduces DNA damage-induced phosphorylation; when associated with A-72, A-73, A-75 and A-76. Abolishes DNA damage-induced phosphorylation and function in DNA repair; when associated with A-73, A-249, A-279 and A-289." evidence="11 18 22">
    <original>T</original>
    <variation>A</variation>
    <location>
        <position position="90"/>
    </location>
</feature>
<feature type="mutagenesis site" description="Leads to camptothecin hypersensitivity and loss of function; when associated with A-225." evidence="23">
    <original>R</original>
    <variation>A</variation>
    <location>
        <position position="223"/>
    </location>
</feature>
<feature type="mutagenesis site" description="Leads to camptothecin hypersensitivity and loss of function; when associated with A-223." evidence="23">
    <original>L</original>
    <variation>A</variation>
    <location>
        <position position="225"/>
    </location>
</feature>
<feature type="mutagenesis site" description="Reduces DNA damage-induced phosphorylation; when associated with A-278, A-279, and A-289. Abolishes DNA damage-induced phosphorylation and function in DNA repair; when associated with A-73, A-90, A-279 and A-289." evidence="11 18 22">
    <original>S</original>
    <variation>A</variation>
    <location>
        <position position="249"/>
    </location>
</feature>
<feature type="mutagenesis site" description="Leads to camptothecin hypersensitivity and loss of function." evidence="23 28">
    <original>S</original>
    <variation>A</variation>
    <location>
        <position position="267"/>
    </location>
</feature>
<feature type="mutagenesis site" description="Leads to constitutive activation of the DNA repair function." evidence="23 28">
    <original>S</original>
    <variation>E</variation>
    <location>
        <position position="267"/>
    </location>
</feature>
<feature type="mutagenesis site" description="Abolishes DNA-binding and endonuclease activity." evidence="21">
    <original>G</original>
    <variation>D</variation>
    <location>
        <position position="270"/>
    </location>
</feature>
<feature type="mutagenesis site" description="Reduces DNA damage-induced phosphorylation; when associated with A-249, A-279, and A-289." evidence="11">
    <original>S</original>
    <variation>A</variation>
    <location>
        <position position="278"/>
    </location>
</feature>
<feature type="mutagenesis site" description="Reduces DNA damage-induced phosphorylation; when associated with A-249, A-278, and A-289. Abolishes DNA damage-induced phosphorylation and function in DNA repair; when associated with A-73, A-90, A-249 and A-289." evidence="11 18 22">
    <original>T</original>
    <variation>A</variation>
    <location>
        <position position="279"/>
    </location>
</feature>
<feature type="mutagenesis site" description="Reduces DNA damage-induced phosphorylation; when associated with A-249, A-278, and A-279. Abolishes DNA damage-induced phosphorylation and function in DNA repair; when associated with A-73, A-90, A-249 and A-279." evidence="11 18 22">
    <original>S</original>
    <variation>A</variation>
    <location>
        <position position="289"/>
    </location>
</feature>
<keyword id="KW-0963">Cytoplasm</keyword>
<keyword id="KW-0227">DNA damage</keyword>
<keyword id="KW-0234">DNA repair</keyword>
<keyword id="KW-0238">DNA-binding</keyword>
<keyword id="KW-0255">Endonuclease</keyword>
<keyword id="KW-0378">Hydrolase</keyword>
<keyword id="KW-0469">Meiosis</keyword>
<keyword id="KW-0540">Nuclease</keyword>
<keyword id="KW-0539">Nucleus</keyword>
<keyword id="KW-0597">Phosphoprotein</keyword>
<keyword id="KW-1185">Reference proteome</keyword>
<name>COM1_YEAST</name>
<sequence length="345" mass="40097">MVTGEENVYLKSSLSILKELSLDELLNVQYDVTTLIAKRVQALQNRNKCVLEEPNSKLAEILCHEKNAPQQSSQTSAGPGEQDSEDFILTQFDEDIKKESAEVHYRNENKHTVQLPLVTMPPNRHKRKISEFSSPLNGLNNLSDLEDCSDTVIHEKDNDKENKTRKLLGIELENPESTSPNLYKNVKDNFLFDFNTNPLTKRAWILEDFRPNEDIAPVKRGRRKLERFYAQVGKPEDSKHRSLSVVIESQNSDYEFAFDNLRNRSKSPPGFGRLDFPSTQEGNEDKKKSQEIIRRKTKYRFLMASNNKIPPYEREYVFKREQLNQIVDDGCFFWSDKLLQIYARC</sequence>
<evidence type="ECO:0000256" key="1">
    <source>
        <dbReference type="SAM" id="MobiDB-lite"/>
    </source>
</evidence>
<evidence type="ECO:0000269" key="2">
    <source>
    </source>
</evidence>
<evidence type="ECO:0000269" key="3">
    <source>
    </source>
</evidence>
<evidence type="ECO:0000269" key="4">
    <source>
    </source>
</evidence>
<evidence type="ECO:0000269" key="5">
    <source>
    </source>
</evidence>
<evidence type="ECO:0000269" key="6">
    <source>
    </source>
</evidence>
<evidence type="ECO:0000269" key="7">
    <source>
    </source>
</evidence>
<evidence type="ECO:0000269" key="8">
    <source>
    </source>
</evidence>
<evidence type="ECO:0000269" key="9">
    <source>
    </source>
</evidence>
<evidence type="ECO:0000269" key="10">
    <source>
    </source>
</evidence>
<evidence type="ECO:0000269" key="11">
    <source>
    </source>
</evidence>
<evidence type="ECO:0000269" key="12">
    <source>
    </source>
</evidence>
<evidence type="ECO:0000269" key="13">
    <source>
    </source>
</evidence>
<evidence type="ECO:0000269" key="14">
    <source>
    </source>
</evidence>
<evidence type="ECO:0000269" key="15">
    <source>
    </source>
</evidence>
<evidence type="ECO:0000269" key="16">
    <source>
    </source>
</evidence>
<evidence type="ECO:0000269" key="17">
    <source>
    </source>
</evidence>
<evidence type="ECO:0000269" key="18">
    <source>
    </source>
</evidence>
<evidence type="ECO:0000269" key="19">
    <source>
    </source>
</evidence>
<evidence type="ECO:0000269" key="20">
    <source>
    </source>
</evidence>
<evidence type="ECO:0000269" key="21">
    <source>
    </source>
</evidence>
<evidence type="ECO:0000269" key="22">
    <source>
    </source>
</evidence>
<evidence type="ECO:0000269" key="23">
    <source>
    </source>
</evidence>
<evidence type="ECO:0000269" key="24">
    <source>
    </source>
</evidence>
<evidence type="ECO:0000269" key="25">
    <source>
    </source>
</evidence>
<evidence type="ECO:0000269" key="26">
    <source>
    </source>
</evidence>
<evidence type="ECO:0000269" key="27">
    <source>
    </source>
</evidence>
<evidence type="ECO:0000269" key="28">
    <source>
    </source>
</evidence>
<evidence type="ECO:0000269" key="29">
    <source>
    </source>
</evidence>
<evidence type="ECO:0000305" key="30"/>
<evidence type="ECO:0007744" key="31">
    <source>
    </source>
</evidence>